<organism>
    <name type="scientific">Streptococcus agalactiae serotype V (strain ATCC BAA-611 / 2603 V/R)</name>
    <dbReference type="NCBI Taxonomy" id="208435"/>
    <lineage>
        <taxon>Bacteria</taxon>
        <taxon>Bacillati</taxon>
        <taxon>Bacillota</taxon>
        <taxon>Bacilli</taxon>
        <taxon>Lactobacillales</taxon>
        <taxon>Streptococcaceae</taxon>
        <taxon>Streptococcus</taxon>
    </lineage>
</organism>
<dbReference type="EC" id="2.8.1.13" evidence="1"/>
<dbReference type="EMBL" id="AE009948">
    <property type="protein sequence ID" value="AAN01002.1"/>
    <property type="molecule type" value="Genomic_DNA"/>
</dbReference>
<dbReference type="RefSeq" id="NP_689129.1">
    <property type="nucleotide sequence ID" value="NC_004116.1"/>
</dbReference>
<dbReference type="RefSeq" id="WP_000131746.1">
    <property type="nucleotide sequence ID" value="NC_004116.1"/>
</dbReference>
<dbReference type="SMR" id="P66979"/>
<dbReference type="STRING" id="208435.SAG2144"/>
<dbReference type="GeneID" id="66886879"/>
<dbReference type="KEGG" id="sag:SAG2144"/>
<dbReference type="PATRIC" id="fig|208435.3.peg.2147"/>
<dbReference type="HOGENOM" id="CLU_035188_1_0_9"/>
<dbReference type="OrthoDB" id="9800696at2"/>
<dbReference type="Proteomes" id="UP000000821">
    <property type="component" value="Chromosome"/>
</dbReference>
<dbReference type="GO" id="GO:0005737">
    <property type="term" value="C:cytoplasm"/>
    <property type="evidence" value="ECO:0007669"/>
    <property type="project" value="UniProtKB-SubCell"/>
</dbReference>
<dbReference type="GO" id="GO:0005524">
    <property type="term" value="F:ATP binding"/>
    <property type="evidence" value="ECO:0007669"/>
    <property type="project" value="UniProtKB-KW"/>
</dbReference>
<dbReference type="GO" id="GO:0000049">
    <property type="term" value="F:tRNA binding"/>
    <property type="evidence" value="ECO:0007669"/>
    <property type="project" value="UniProtKB-KW"/>
</dbReference>
<dbReference type="GO" id="GO:0103016">
    <property type="term" value="F:tRNA-uridine 2-sulfurtransferase activity"/>
    <property type="evidence" value="ECO:0007669"/>
    <property type="project" value="UniProtKB-EC"/>
</dbReference>
<dbReference type="GO" id="GO:0002143">
    <property type="term" value="P:tRNA wobble position uridine thiolation"/>
    <property type="evidence" value="ECO:0007669"/>
    <property type="project" value="TreeGrafter"/>
</dbReference>
<dbReference type="CDD" id="cd01998">
    <property type="entry name" value="MnmA_TRMU-like"/>
    <property type="match status" value="1"/>
</dbReference>
<dbReference type="FunFam" id="2.30.30.280:FF:000001">
    <property type="entry name" value="tRNA-specific 2-thiouridylase MnmA"/>
    <property type="match status" value="1"/>
</dbReference>
<dbReference type="FunFam" id="2.40.30.10:FF:000023">
    <property type="entry name" value="tRNA-specific 2-thiouridylase MnmA"/>
    <property type="match status" value="1"/>
</dbReference>
<dbReference type="FunFam" id="3.40.50.620:FF:000004">
    <property type="entry name" value="tRNA-specific 2-thiouridylase MnmA"/>
    <property type="match status" value="1"/>
</dbReference>
<dbReference type="Gene3D" id="2.30.30.280">
    <property type="entry name" value="Adenine nucleotide alpha hydrolases-like domains"/>
    <property type="match status" value="1"/>
</dbReference>
<dbReference type="Gene3D" id="3.40.50.620">
    <property type="entry name" value="HUPs"/>
    <property type="match status" value="1"/>
</dbReference>
<dbReference type="Gene3D" id="2.40.30.10">
    <property type="entry name" value="Translation factors"/>
    <property type="match status" value="1"/>
</dbReference>
<dbReference type="HAMAP" id="MF_00144">
    <property type="entry name" value="tRNA_thiouridyl_MnmA"/>
    <property type="match status" value="1"/>
</dbReference>
<dbReference type="InterPro" id="IPR004506">
    <property type="entry name" value="MnmA-like"/>
</dbReference>
<dbReference type="InterPro" id="IPR046885">
    <property type="entry name" value="MnmA-like_C"/>
</dbReference>
<dbReference type="InterPro" id="IPR046884">
    <property type="entry name" value="MnmA-like_central"/>
</dbReference>
<dbReference type="InterPro" id="IPR023382">
    <property type="entry name" value="MnmA-like_central_sf"/>
</dbReference>
<dbReference type="InterPro" id="IPR014729">
    <property type="entry name" value="Rossmann-like_a/b/a_fold"/>
</dbReference>
<dbReference type="NCBIfam" id="NF001138">
    <property type="entry name" value="PRK00143.1"/>
    <property type="match status" value="1"/>
</dbReference>
<dbReference type="NCBIfam" id="TIGR00420">
    <property type="entry name" value="trmU"/>
    <property type="match status" value="1"/>
</dbReference>
<dbReference type="PANTHER" id="PTHR11933:SF5">
    <property type="entry name" value="MITOCHONDRIAL TRNA-SPECIFIC 2-THIOURIDYLASE 1"/>
    <property type="match status" value="1"/>
</dbReference>
<dbReference type="PANTHER" id="PTHR11933">
    <property type="entry name" value="TRNA 5-METHYLAMINOMETHYL-2-THIOURIDYLATE -METHYLTRANSFERASE"/>
    <property type="match status" value="1"/>
</dbReference>
<dbReference type="Pfam" id="PF03054">
    <property type="entry name" value="tRNA_Me_trans"/>
    <property type="match status" value="1"/>
</dbReference>
<dbReference type="Pfam" id="PF20258">
    <property type="entry name" value="tRNA_Me_trans_C"/>
    <property type="match status" value="1"/>
</dbReference>
<dbReference type="Pfam" id="PF20259">
    <property type="entry name" value="tRNA_Me_trans_M"/>
    <property type="match status" value="1"/>
</dbReference>
<dbReference type="SUPFAM" id="SSF52402">
    <property type="entry name" value="Adenine nucleotide alpha hydrolases-like"/>
    <property type="match status" value="1"/>
</dbReference>
<keyword id="KW-0067">ATP-binding</keyword>
<keyword id="KW-0963">Cytoplasm</keyword>
<keyword id="KW-1015">Disulfide bond</keyword>
<keyword id="KW-0547">Nucleotide-binding</keyword>
<keyword id="KW-1185">Reference proteome</keyword>
<keyword id="KW-0694">RNA-binding</keyword>
<keyword id="KW-0808">Transferase</keyword>
<keyword id="KW-0819">tRNA processing</keyword>
<keyword id="KW-0820">tRNA-binding</keyword>
<gene>
    <name evidence="1" type="primary">mnmA</name>
    <name type="synonym">trmU</name>
    <name type="ordered locus">SAG2144</name>
</gene>
<feature type="chain" id="PRO_0000121682" description="tRNA-specific 2-thiouridylase MnmA">
    <location>
        <begin position="1"/>
        <end position="373"/>
    </location>
</feature>
<feature type="region of interest" description="Interaction with target base in tRNA" evidence="1">
    <location>
        <begin position="98"/>
        <end position="100"/>
    </location>
</feature>
<feature type="region of interest" description="Interaction with tRNA" evidence="1">
    <location>
        <begin position="150"/>
        <end position="152"/>
    </location>
</feature>
<feature type="region of interest" description="Interaction with tRNA" evidence="1">
    <location>
        <begin position="312"/>
        <end position="313"/>
    </location>
</feature>
<feature type="active site" description="Nucleophile" evidence="1">
    <location>
        <position position="103"/>
    </location>
</feature>
<feature type="active site" description="Cysteine persulfide intermediate" evidence="1">
    <location>
        <position position="200"/>
    </location>
</feature>
<feature type="binding site" evidence="1">
    <location>
        <begin position="12"/>
        <end position="19"/>
    </location>
    <ligand>
        <name>ATP</name>
        <dbReference type="ChEBI" id="CHEBI:30616"/>
    </ligand>
</feature>
<feature type="binding site" evidence="1">
    <location>
        <position position="38"/>
    </location>
    <ligand>
        <name>ATP</name>
        <dbReference type="ChEBI" id="CHEBI:30616"/>
    </ligand>
</feature>
<feature type="binding site" evidence="1">
    <location>
        <position position="127"/>
    </location>
    <ligand>
        <name>ATP</name>
        <dbReference type="ChEBI" id="CHEBI:30616"/>
    </ligand>
</feature>
<feature type="site" description="Interaction with tRNA" evidence="1">
    <location>
        <position position="128"/>
    </location>
</feature>
<feature type="site" description="Interaction with tRNA" evidence="1">
    <location>
        <position position="344"/>
    </location>
</feature>
<feature type="disulfide bond" description="Alternate" evidence="1">
    <location>
        <begin position="103"/>
        <end position="200"/>
    </location>
</feature>
<reference key="1">
    <citation type="journal article" date="2002" name="Proc. Natl. Acad. Sci. U.S.A.">
        <title>Complete genome sequence and comparative genomic analysis of an emerging human pathogen, serotype V Streptococcus agalactiae.</title>
        <authorList>
            <person name="Tettelin H."/>
            <person name="Masignani V."/>
            <person name="Cieslewicz M.J."/>
            <person name="Eisen J.A."/>
            <person name="Peterson S.N."/>
            <person name="Wessels M.R."/>
            <person name="Paulsen I.T."/>
            <person name="Nelson K.E."/>
            <person name="Margarit I."/>
            <person name="Read T.D."/>
            <person name="Madoff L.C."/>
            <person name="Wolf A.M."/>
            <person name="Beanan M.J."/>
            <person name="Brinkac L.M."/>
            <person name="Daugherty S.C."/>
            <person name="DeBoy R.T."/>
            <person name="Durkin A.S."/>
            <person name="Kolonay J.F."/>
            <person name="Madupu R."/>
            <person name="Lewis M.R."/>
            <person name="Radune D."/>
            <person name="Fedorova N.B."/>
            <person name="Scanlan D."/>
            <person name="Khouri H.M."/>
            <person name="Mulligan S."/>
            <person name="Carty H.A."/>
            <person name="Cline R.T."/>
            <person name="Van Aken S.E."/>
            <person name="Gill J."/>
            <person name="Scarselli M."/>
            <person name="Mora M."/>
            <person name="Iacobini E.T."/>
            <person name="Brettoni C."/>
            <person name="Galli G."/>
            <person name="Mariani M."/>
            <person name="Vegni F."/>
            <person name="Maione D."/>
            <person name="Rinaudo D."/>
            <person name="Rappuoli R."/>
            <person name="Telford J.L."/>
            <person name="Kasper D.L."/>
            <person name="Grandi G."/>
            <person name="Fraser C.M."/>
        </authorList>
    </citation>
    <scope>NUCLEOTIDE SEQUENCE [LARGE SCALE GENOMIC DNA]</scope>
    <source>
        <strain>ATCC BAA-611 / 2603 V/R</strain>
    </source>
</reference>
<sequence>MTDNSNIRVVVGMSGGVDSSVTALLLKEQGYDVIGVFMKNWDDTDEFGVCTATEDYKDVAAVADQIGIPYYSVNFEKEYWDRVFEYFLAEYRAGRTPNPDVMCNKEIKFKAFLDYAMTLGADYVATGHYAQVTRDENGIVHMLRGADNNKDQTYFLSQLSQEQLQKTLFPLGHLQKPEVRRIAEEAGLATAKKKDSTGICFIGEKNFKDFLGQYLPAQPGRMMTVDGRDMGEHAGLMYYTIGQRGGLGIGGQHGGDNKPWFVVGKDLSKNILYVGQGFYHDSLMSTSLTASEIHFTRDMPNEFKLECTAKFRYRQPDSKVTVYVKGNQARVVFDDLQRAITPGQAVVFYNEQECLGGGMIDQAYRDDKICQYI</sequence>
<comment type="function">
    <text evidence="1">Catalyzes the 2-thiolation of uridine at the wobble position (U34) of tRNA, leading to the formation of s(2)U34.</text>
</comment>
<comment type="catalytic activity">
    <reaction evidence="1">
        <text>S-sulfanyl-L-cysteinyl-[protein] + uridine(34) in tRNA + AH2 + ATP = 2-thiouridine(34) in tRNA + L-cysteinyl-[protein] + A + AMP + diphosphate + H(+)</text>
        <dbReference type="Rhea" id="RHEA:47032"/>
        <dbReference type="Rhea" id="RHEA-COMP:10131"/>
        <dbReference type="Rhea" id="RHEA-COMP:11726"/>
        <dbReference type="Rhea" id="RHEA-COMP:11727"/>
        <dbReference type="Rhea" id="RHEA-COMP:11728"/>
        <dbReference type="ChEBI" id="CHEBI:13193"/>
        <dbReference type="ChEBI" id="CHEBI:15378"/>
        <dbReference type="ChEBI" id="CHEBI:17499"/>
        <dbReference type="ChEBI" id="CHEBI:29950"/>
        <dbReference type="ChEBI" id="CHEBI:30616"/>
        <dbReference type="ChEBI" id="CHEBI:33019"/>
        <dbReference type="ChEBI" id="CHEBI:61963"/>
        <dbReference type="ChEBI" id="CHEBI:65315"/>
        <dbReference type="ChEBI" id="CHEBI:87170"/>
        <dbReference type="ChEBI" id="CHEBI:456215"/>
        <dbReference type="EC" id="2.8.1.13"/>
    </reaction>
</comment>
<comment type="subcellular location">
    <subcellularLocation>
        <location evidence="1">Cytoplasm</location>
    </subcellularLocation>
</comment>
<comment type="similarity">
    <text evidence="1">Belongs to the MnmA/TRMU family.</text>
</comment>
<evidence type="ECO:0000255" key="1">
    <source>
        <dbReference type="HAMAP-Rule" id="MF_00144"/>
    </source>
</evidence>
<protein>
    <recommendedName>
        <fullName evidence="1">tRNA-specific 2-thiouridylase MnmA</fullName>
        <ecNumber evidence="1">2.8.1.13</ecNumber>
    </recommendedName>
</protein>
<name>MNMA_STRA5</name>
<proteinExistence type="inferred from homology"/>
<accession>P66979</accession>
<accession>Q8CWZ9</accession>
<accession>Q8E2L9</accession>